<sequence length="649" mass="73453">MSHIIELPEMLANQIAAGEVIERPASVVKELVENAIDAGSSQIIIEIEEAGLKKIQITDNGHGIAHDEVELALRRHATSKIKNQADLFRIRTLGFRGEALPSIASVSVLTLLTAVDGASHGTKLVARGGEVEEVIPATSPVGTKVCVEDLFFNTPARLKYMKSQQAELSHIIDIVNRLGLAHPEISFSLISDGKEMTRTAGTGQLRQAIAGIYGLVSAKKMIEIENSDLDFEISGFVSLPELTRANRNYISLFINGRYIKNFLLNRAILDGFGSKLMVGRFPLAVIHIHIDPYLADVNVHPTKQEVRISKEKELMALVSEAIANSLKEQTLIPDALENLAKSTVRNREKVEQTILPLKENTFYYEKTEPSRPSQTEVADYQVELTDEGQDLTLFAKETLDRLTKPAKLHFAERKPANYDQLDHPELDLASIDKAYDKLEREEASSFPELEFFGQMHGTYLFAQGRDGLYIIDQHAAQERVKYEEYRESIGNVDQSQQQLLVPYIFEFPADDALRLKERMPLLEEVGVFLAEYGENQFILREHPIWMAEEEIESGIYEMCDMLLLTKEVSIKKYRAELAIMMSCKRSIKANHRIDDHSARQLLYQLSQCDNPYNCPHGRPVLVHFTKSDMEKMFRRIQENHTSLRELGKY</sequence>
<dbReference type="EMBL" id="CP001015">
    <property type="protein sequence ID" value="ACF56135.1"/>
    <property type="molecule type" value="Genomic_DNA"/>
</dbReference>
<dbReference type="SMR" id="B5E6C5"/>
<dbReference type="KEGG" id="spx:SPG_0165"/>
<dbReference type="HOGENOM" id="CLU_004131_4_1_9"/>
<dbReference type="GO" id="GO:0032300">
    <property type="term" value="C:mismatch repair complex"/>
    <property type="evidence" value="ECO:0007669"/>
    <property type="project" value="InterPro"/>
</dbReference>
<dbReference type="GO" id="GO:0005524">
    <property type="term" value="F:ATP binding"/>
    <property type="evidence" value="ECO:0007669"/>
    <property type="project" value="InterPro"/>
</dbReference>
<dbReference type="GO" id="GO:0016887">
    <property type="term" value="F:ATP hydrolysis activity"/>
    <property type="evidence" value="ECO:0007669"/>
    <property type="project" value="InterPro"/>
</dbReference>
<dbReference type="GO" id="GO:0140664">
    <property type="term" value="F:ATP-dependent DNA damage sensor activity"/>
    <property type="evidence" value="ECO:0007669"/>
    <property type="project" value="InterPro"/>
</dbReference>
<dbReference type="GO" id="GO:0030983">
    <property type="term" value="F:mismatched DNA binding"/>
    <property type="evidence" value="ECO:0007669"/>
    <property type="project" value="InterPro"/>
</dbReference>
<dbReference type="GO" id="GO:0006298">
    <property type="term" value="P:mismatch repair"/>
    <property type="evidence" value="ECO:0007669"/>
    <property type="project" value="UniProtKB-UniRule"/>
</dbReference>
<dbReference type="CDD" id="cd16926">
    <property type="entry name" value="HATPase_MutL-MLH-PMS-like"/>
    <property type="match status" value="1"/>
</dbReference>
<dbReference type="CDD" id="cd00782">
    <property type="entry name" value="MutL_Trans"/>
    <property type="match status" value="1"/>
</dbReference>
<dbReference type="FunFam" id="3.30.1370.100:FF:000004">
    <property type="entry name" value="DNA mismatch repair endonuclease MutL"/>
    <property type="match status" value="1"/>
</dbReference>
<dbReference type="FunFam" id="3.30.230.10:FF:000036">
    <property type="entry name" value="DNA mismatch repair endonuclease MutL"/>
    <property type="match status" value="1"/>
</dbReference>
<dbReference type="FunFam" id="3.30.565.10:FF:000003">
    <property type="entry name" value="DNA mismatch repair endonuclease MutL"/>
    <property type="match status" value="1"/>
</dbReference>
<dbReference type="Gene3D" id="3.30.230.10">
    <property type="match status" value="1"/>
</dbReference>
<dbReference type="Gene3D" id="3.30.565.10">
    <property type="entry name" value="Histidine kinase-like ATPase, C-terminal domain"/>
    <property type="match status" value="1"/>
</dbReference>
<dbReference type="Gene3D" id="3.30.1540.20">
    <property type="entry name" value="MutL, C-terminal domain, dimerisation subdomain"/>
    <property type="match status" value="1"/>
</dbReference>
<dbReference type="Gene3D" id="3.30.1370.100">
    <property type="entry name" value="MutL, C-terminal domain, regulatory subdomain"/>
    <property type="match status" value="1"/>
</dbReference>
<dbReference type="HAMAP" id="MF_00149">
    <property type="entry name" value="DNA_mis_repair"/>
    <property type="match status" value="1"/>
</dbReference>
<dbReference type="InterPro" id="IPR014762">
    <property type="entry name" value="DNA_mismatch_repair_CS"/>
</dbReference>
<dbReference type="InterPro" id="IPR020667">
    <property type="entry name" value="DNA_mismatch_repair_MutL"/>
</dbReference>
<dbReference type="InterPro" id="IPR013507">
    <property type="entry name" value="DNA_mismatch_S5_2-like"/>
</dbReference>
<dbReference type="InterPro" id="IPR036890">
    <property type="entry name" value="HATPase_C_sf"/>
</dbReference>
<dbReference type="InterPro" id="IPR002099">
    <property type="entry name" value="MutL/Mlh/PMS"/>
</dbReference>
<dbReference type="InterPro" id="IPR038973">
    <property type="entry name" value="MutL/Mlh/Pms-like"/>
</dbReference>
<dbReference type="InterPro" id="IPR014790">
    <property type="entry name" value="MutL_C"/>
</dbReference>
<dbReference type="InterPro" id="IPR042120">
    <property type="entry name" value="MutL_C_dimsub"/>
</dbReference>
<dbReference type="InterPro" id="IPR042121">
    <property type="entry name" value="MutL_C_regsub"/>
</dbReference>
<dbReference type="InterPro" id="IPR037198">
    <property type="entry name" value="MutL_C_sf"/>
</dbReference>
<dbReference type="InterPro" id="IPR020568">
    <property type="entry name" value="Ribosomal_Su5_D2-typ_SF"/>
</dbReference>
<dbReference type="InterPro" id="IPR014721">
    <property type="entry name" value="Ribsml_uS5_D2-typ_fold_subgr"/>
</dbReference>
<dbReference type="NCBIfam" id="TIGR00585">
    <property type="entry name" value="mutl"/>
    <property type="match status" value="1"/>
</dbReference>
<dbReference type="NCBIfam" id="NF000950">
    <property type="entry name" value="PRK00095.1-3"/>
    <property type="match status" value="1"/>
</dbReference>
<dbReference type="PANTHER" id="PTHR10073">
    <property type="entry name" value="DNA MISMATCH REPAIR PROTEIN MLH, PMS, MUTL"/>
    <property type="match status" value="1"/>
</dbReference>
<dbReference type="PANTHER" id="PTHR10073:SF12">
    <property type="entry name" value="DNA MISMATCH REPAIR PROTEIN MLH1"/>
    <property type="match status" value="1"/>
</dbReference>
<dbReference type="Pfam" id="PF01119">
    <property type="entry name" value="DNA_mis_repair"/>
    <property type="match status" value="1"/>
</dbReference>
<dbReference type="Pfam" id="PF13589">
    <property type="entry name" value="HATPase_c_3"/>
    <property type="match status" value="1"/>
</dbReference>
<dbReference type="Pfam" id="PF08676">
    <property type="entry name" value="MutL_C"/>
    <property type="match status" value="1"/>
</dbReference>
<dbReference type="SMART" id="SM01340">
    <property type="entry name" value="DNA_mis_repair"/>
    <property type="match status" value="1"/>
</dbReference>
<dbReference type="SMART" id="SM00853">
    <property type="entry name" value="MutL_C"/>
    <property type="match status" value="1"/>
</dbReference>
<dbReference type="SUPFAM" id="SSF55874">
    <property type="entry name" value="ATPase domain of HSP90 chaperone/DNA topoisomerase II/histidine kinase"/>
    <property type="match status" value="1"/>
</dbReference>
<dbReference type="SUPFAM" id="SSF118116">
    <property type="entry name" value="DNA mismatch repair protein MutL"/>
    <property type="match status" value="1"/>
</dbReference>
<dbReference type="SUPFAM" id="SSF54211">
    <property type="entry name" value="Ribosomal protein S5 domain 2-like"/>
    <property type="match status" value="1"/>
</dbReference>
<dbReference type="PROSITE" id="PS00058">
    <property type="entry name" value="DNA_MISMATCH_REPAIR_1"/>
    <property type="match status" value="1"/>
</dbReference>
<accession>B5E6C5</accession>
<organism>
    <name type="scientific">Streptococcus pneumoniae serotype 19F (strain G54)</name>
    <dbReference type="NCBI Taxonomy" id="512566"/>
    <lineage>
        <taxon>Bacteria</taxon>
        <taxon>Bacillati</taxon>
        <taxon>Bacillota</taxon>
        <taxon>Bacilli</taxon>
        <taxon>Lactobacillales</taxon>
        <taxon>Streptococcaceae</taxon>
        <taxon>Streptococcus</taxon>
    </lineage>
</organism>
<name>MUTL_STRP4</name>
<proteinExistence type="inferred from homology"/>
<protein>
    <recommendedName>
        <fullName evidence="1">DNA mismatch repair protein MutL</fullName>
    </recommendedName>
</protein>
<gene>
    <name evidence="1" type="primary">mutL</name>
    <name type="ordered locus">SPG_0165</name>
</gene>
<reference key="1">
    <citation type="journal article" date="2001" name="Microb. Drug Resist.">
        <title>Annotated draft genomic sequence from a Streptococcus pneumoniae type 19F clinical isolate.</title>
        <authorList>
            <person name="Dopazo J."/>
            <person name="Mendoza A."/>
            <person name="Herrero J."/>
            <person name="Caldara F."/>
            <person name="Humbert Y."/>
            <person name="Friedli L."/>
            <person name="Guerrier M."/>
            <person name="Grand-Schenk E."/>
            <person name="Gandin C."/>
            <person name="de Francesco M."/>
            <person name="Polissi A."/>
            <person name="Buell G."/>
            <person name="Feger G."/>
            <person name="Garcia E."/>
            <person name="Peitsch M."/>
            <person name="Garcia-Bustos J.F."/>
        </authorList>
    </citation>
    <scope>NUCLEOTIDE SEQUENCE [LARGE SCALE GENOMIC DNA]</scope>
    <source>
        <strain>G54</strain>
    </source>
</reference>
<reference key="2">
    <citation type="submission" date="2008-03" db="EMBL/GenBank/DDBJ databases">
        <title>Pneumococcal beta glucoside metabolism investigated by whole genome comparison.</title>
        <authorList>
            <person name="Mulas L."/>
            <person name="Trappetti C."/>
            <person name="Hakenbeck R."/>
            <person name="Iannelli F."/>
            <person name="Pozzi G."/>
            <person name="Davidsen T.M."/>
            <person name="Tettelin H."/>
            <person name="Oggioni M."/>
        </authorList>
    </citation>
    <scope>NUCLEOTIDE SEQUENCE [LARGE SCALE GENOMIC DNA]</scope>
    <source>
        <strain>G54</strain>
    </source>
</reference>
<feature type="chain" id="PRO_1000096690" description="DNA mismatch repair protein MutL">
    <location>
        <begin position="1"/>
        <end position="649"/>
    </location>
</feature>
<keyword id="KW-0227">DNA damage</keyword>
<keyword id="KW-0234">DNA repair</keyword>
<comment type="function">
    <text evidence="1">This protein is involved in the repair of mismatches in DNA. It is required for dam-dependent methyl-directed DNA mismatch repair. May act as a 'molecular matchmaker', a protein that promotes the formation of a stable complex between two or more DNA-binding proteins in an ATP-dependent manner without itself being part of a final effector complex.</text>
</comment>
<comment type="similarity">
    <text evidence="1">Belongs to the DNA mismatch repair MutL/HexB family.</text>
</comment>
<evidence type="ECO:0000255" key="1">
    <source>
        <dbReference type="HAMAP-Rule" id="MF_00149"/>
    </source>
</evidence>